<evidence type="ECO:0000255" key="1"/>
<evidence type="ECO:0000305" key="2"/>
<gene>
    <name type="primary">ctaE</name>
</gene>
<sequence length="201" mass="22886">MQGTVESQGTAIAVDHAHEHPDFRVLGLLVFLISESLMFGGLFAAYLLLRGMHEQWPPEGTEVELFVPTINTLILISSSFVIHYGDVAIKKDDVRGMRKWYWITAAMGAVFLGGQVYEYLTLGYGLRTNVFANCFYVMTGFHGLHVFIGILLILGVIWRSRRPGHYNAQKHTGVAMAEIYWHFVDVIWIILFTLLYILTRF</sequence>
<name>COX3_THEVL</name>
<organism>
    <name type="scientific">Thermostichus vulcanus</name>
    <name type="common">Synechococcus vulcanus</name>
    <dbReference type="NCBI Taxonomy" id="32053"/>
    <lineage>
        <taxon>Bacteria</taxon>
        <taxon>Bacillati</taxon>
        <taxon>Cyanobacteriota</taxon>
        <taxon>Cyanophyceae</taxon>
        <taxon>Thermostichales</taxon>
        <taxon>Thermostichaceae</taxon>
        <taxon>Thermostichus</taxon>
    </lineage>
</organism>
<reference key="1">
    <citation type="journal article" date="1993" name="Biochim. Biophys. Acta">
        <title>The genes in the thermophilic cyanobacterium Synechococcus vulcanus encoding cytochrome-c oxidase.</title>
        <authorList>
            <person name="Sone N."/>
            <person name="Tano H."/>
            <person name="Ishizuka M."/>
        </authorList>
    </citation>
    <scope>NUCLEOTIDE SEQUENCE [GENOMIC DNA]</scope>
</reference>
<dbReference type="EC" id="7.1.1.9"/>
<dbReference type="EMBL" id="D16254">
    <property type="protein sequence ID" value="BAA41042.1"/>
    <property type="molecule type" value="Genomic_DNA"/>
</dbReference>
<dbReference type="SMR" id="P50677"/>
<dbReference type="GO" id="GO:0005886">
    <property type="term" value="C:plasma membrane"/>
    <property type="evidence" value="ECO:0007669"/>
    <property type="project" value="UniProtKB-SubCell"/>
</dbReference>
<dbReference type="GO" id="GO:0004129">
    <property type="term" value="F:cytochrome-c oxidase activity"/>
    <property type="evidence" value="ECO:0007669"/>
    <property type="project" value="UniProtKB-EC"/>
</dbReference>
<dbReference type="GO" id="GO:0019646">
    <property type="term" value="P:aerobic electron transport chain"/>
    <property type="evidence" value="ECO:0007669"/>
    <property type="project" value="InterPro"/>
</dbReference>
<dbReference type="CDD" id="cd00386">
    <property type="entry name" value="Heme_Cu_Oxidase_III_like"/>
    <property type="match status" value="1"/>
</dbReference>
<dbReference type="FunFam" id="1.20.120.80:FF:000001">
    <property type="entry name" value="Cytochrome (Ubi)quinol oxidase subunit III"/>
    <property type="match status" value="1"/>
</dbReference>
<dbReference type="Gene3D" id="1.20.120.80">
    <property type="entry name" value="Cytochrome c oxidase, subunit III, four-helix bundle"/>
    <property type="match status" value="1"/>
</dbReference>
<dbReference type="InterPro" id="IPR024791">
    <property type="entry name" value="Cyt_c/ubiquinol_Oxase_su3"/>
</dbReference>
<dbReference type="InterPro" id="IPR000298">
    <property type="entry name" value="Cyt_c_oxidase-like_su3"/>
</dbReference>
<dbReference type="InterPro" id="IPR035973">
    <property type="entry name" value="Cyt_c_oxidase_su3-like_sf"/>
</dbReference>
<dbReference type="InterPro" id="IPR013833">
    <property type="entry name" value="Cyt_c_oxidase_su3_a-hlx"/>
</dbReference>
<dbReference type="PANTHER" id="PTHR11403:SF2">
    <property type="entry name" value="CYTOCHROME BO(3) UBIQUINOL OXIDASE SUBUNIT 3"/>
    <property type="match status" value="1"/>
</dbReference>
<dbReference type="PANTHER" id="PTHR11403">
    <property type="entry name" value="CYTOCHROME C OXIDASE SUBUNIT III"/>
    <property type="match status" value="1"/>
</dbReference>
<dbReference type="Pfam" id="PF00510">
    <property type="entry name" value="COX3"/>
    <property type="match status" value="1"/>
</dbReference>
<dbReference type="SUPFAM" id="SSF81452">
    <property type="entry name" value="Cytochrome c oxidase subunit III-like"/>
    <property type="match status" value="1"/>
</dbReference>
<dbReference type="PROSITE" id="PS50253">
    <property type="entry name" value="COX3"/>
    <property type="match status" value="1"/>
</dbReference>
<proteinExistence type="inferred from homology"/>
<feature type="chain" id="PRO_0000183890" description="Cytochrome c oxidase subunit 3">
    <location>
        <begin position="1"/>
        <end position="201"/>
    </location>
</feature>
<feature type="transmembrane region" description="Helical" evidence="1">
    <location>
        <begin position="25"/>
        <end position="45"/>
    </location>
</feature>
<feature type="transmembrane region" description="Helical" evidence="1">
    <location>
        <begin position="65"/>
        <end position="85"/>
    </location>
</feature>
<feature type="transmembrane region" description="Helical" evidence="1">
    <location>
        <begin position="100"/>
        <end position="120"/>
    </location>
</feature>
<feature type="transmembrane region" description="Helical" evidence="1">
    <location>
        <begin position="137"/>
        <end position="157"/>
    </location>
</feature>
<comment type="catalytic activity">
    <reaction>
        <text>4 Fe(II)-[cytochrome c] + O2 + 8 H(+)(in) = 4 Fe(III)-[cytochrome c] + 2 H2O + 4 H(+)(out)</text>
        <dbReference type="Rhea" id="RHEA:11436"/>
        <dbReference type="Rhea" id="RHEA-COMP:10350"/>
        <dbReference type="Rhea" id="RHEA-COMP:14399"/>
        <dbReference type="ChEBI" id="CHEBI:15377"/>
        <dbReference type="ChEBI" id="CHEBI:15378"/>
        <dbReference type="ChEBI" id="CHEBI:15379"/>
        <dbReference type="ChEBI" id="CHEBI:29033"/>
        <dbReference type="ChEBI" id="CHEBI:29034"/>
        <dbReference type="EC" id="7.1.1.9"/>
    </reaction>
</comment>
<comment type="subcellular location">
    <subcellularLocation>
        <location>Cell membrane</location>
        <topology>Multi-pass membrane protein</topology>
    </subcellularLocation>
</comment>
<comment type="similarity">
    <text evidence="2">Belongs to the cytochrome c oxidase subunit 3 family.</text>
</comment>
<keyword id="KW-1003">Cell membrane</keyword>
<keyword id="KW-0472">Membrane</keyword>
<keyword id="KW-1278">Translocase</keyword>
<keyword id="KW-0812">Transmembrane</keyword>
<keyword id="KW-1133">Transmembrane helix</keyword>
<protein>
    <recommendedName>
        <fullName>Cytochrome c oxidase subunit 3</fullName>
        <ecNumber>7.1.1.9</ecNumber>
    </recommendedName>
    <alternativeName>
        <fullName>Cytochrome aa3 subunit 3</fullName>
    </alternativeName>
    <alternativeName>
        <fullName>Cytochrome c oxidase polypeptide III</fullName>
    </alternativeName>
    <alternativeName>
        <fullName>Oxidase aa(3) subunit 3</fullName>
    </alternativeName>
</protein>
<accession>P50677</accession>